<name>HEXD_BOVIN</name>
<sequence length="346" mass="39284">MRLVHLDLKGAPPKVCYLSEIFPLFRALGANGILIEYEDMFPYEGHLRLLRAKHAYSPSEIKEILHLATLNELEVIPLVQTFGHMEFVLKHEALAHLREVARFPNTLNPHKEESLALVTAMIDQVMELHPGARWFHVGCDEVYYLGEGETSRQWLQQEPNSKAKLCLSHMEAVASHMRARYPTTTPLMWDDMLRDIPEDQLSGSRVPQLVEPVLWDYGADLDLHGKALLVEKYRKSGFSWLWAASAFKGATGVNQSLTPIEHHLRNHLQWLQVAGSVPADTLRGIILTGWQRYDHFSVLCELLPVGIPSLAVCLQALLHGDFAENVKARVENFLGISSLEEMSFRR</sequence>
<gene>
    <name evidence="3" type="primary">HEXD</name>
    <name evidence="3" type="synonym">HEXDC</name>
</gene>
<evidence type="ECO:0000250" key="1"/>
<evidence type="ECO:0000250" key="2">
    <source>
        <dbReference type="UniProtKB" id="Q3U4H6"/>
    </source>
</evidence>
<evidence type="ECO:0000250" key="3">
    <source>
        <dbReference type="UniProtKB" id="Q8WVB3"/>
    </source>
</evidence>
<evidence type="ECO:0000305" key="4"/>
<proteinExistence type="evidence at transcript level"/>
<reference key="1">
    <citation type="submission" date="2007-07" db="EMBL/GenBank/DDBJ databases">
        <authorList>
            <consortium name="NIH - Mammalian Gene Collection (MGC) project"/>
        </authorList>
    </citation>
    <scope>NUCLEOTIDE SEQUENCE [LARGE SCALE MRNA]</scope>
    <source>
        <strain>Hereford</strain>
        <tissue>Colon</tissue>
    </source>
</reference>
<keyword id="KW-0963">Cytoplasm</keyword>
<keyword id="KW-1015">Disulfide bond</keyword>
<keyword id="KW-0326">Glycosidase</keyword>
<keyword id="KW-0378">Hydrolase</keyword>
<keyword id="KW-0539">Nucleus</keyword>
<keyword id="KW-1185">Reference proteome</keyword>
<organism>
    <name type="scientific">Bos taurus</name>
    <name type="common">Bovine</name>
    <dbReference type="NCBI Taxonomy" id="9913"/>
    <lineage>
        <taxon>Eukaryota</taxon>
        <taxon>Metazoa</taxon>
        <taxon>Chordata</taxon>
        <taxon>Craniata</taxon>
        <taxon>Vertebrata</taxon>
        <taxon>Euteleostomi</taxon>
        <taxon>Mammalia</taxon>
        <taxon>Eutheria</taxon>
        <taxon>Laurasiatheria</taxon>
        <taxon>Artiodactyla</taxon>
        <taxon>Ruminantia</taxon>
        <taxon>Pecora</taxon>
        <taxon>Bovidae</taxon>
        <taxon>Bovinae</taxon>
        <taxon>Bos</taxon>
    </lineage>
</organism>
<comment type="function">
    <text evidence="2 3">Has hexosaminidase activity. Responsible for the cleavage of the monosaccharides N-acetylglucosamine (GlcNAc) and N-acetylgalactosamine (GalNAc) from cellular substrates. Has a preference for galactosaminide over glucosaminide substrates.</text>
</comment>
<comment type="catalytic activity">
    <reaction evidence="2 3">
        <text>Hydrolysis of terminal non-reducing N-acetyl-D-hexosamine residues in N-acetyl-beta-D-hexosaminides.</text>
        <dbReference type="EC" id="3.2.1.52"/>
    </reaction>
</comment>
<comment type="activity regulation">
    <text evidence="2 3">Inhibited by O-(2-acetamido-2-deoxy-D-glucopyranosylidene)amino N-phenylcarbamate (PUGNAc) (By similarity). Inhibited by galacto-NAG-thiazoline (By similarity).</text>
</comment>
<comment type="subunit">
    <text evidence="2">Homodimer; disulfide-linked.</text>
</comment>
<comment type="subcellular location">
    <subcellularLocation>
        <location evidence="2">Cytoplasm</location>
    </subcellularLocation>
    <subcellularLocation>
        <location evidence="2">Nucleus</location>
    </subcellularLocation>
    <subcellularLocation>
        <location evidence="3">Extracellular vesicle</location>
    </subcellularLocation>
</comment>
<comment type="similarity">
    <text evidence="4">Belongs to the glycosyl hydrolase 20 family.</text>
</comment>
<comment type="sequence caution" evidence="4">
    <conflict type="erroneous initiation">
        <sequence resource="EMBL-CDS" id="AAI48959"/>
    </conflict>
    <text>Extended N-terminus.</text>
</comment>
<protein>
    <recommendedName>
        <fullName evidence="4">Hexosaminidase D</fullName>
        <ecNumber>3.2.1.52</ecNumber>
    </recommendedName>
    <alternativeName>
        <fullName>Beta-N-acetylhexosaminidase</fullName>
    </alternativeName>
    <alternativeName>
        <fullName>Beta-hexosaminidase D</fullName>
    </alternativeName>
    <alternativeName>
        <fullName>Hexosaminidase domain-containing protein</fullName>
    </alternativeName>
    <alternativeName>
        <fullName>N-acetyl-beta-galactosaminidase</fullName>
    </alternativeName>
</protein>
<accession>A6QNR0</accession>
<dbReference type="EC" id="3.2.1.52"/>
<dbReference type="EMBL" id="BC148958">
    <property type="protein sequence ID" value="AAI48959.1"/>
    <property type="status" value="ALT_INIT"/>
    <property type="molecule type" value="mRNA"/>
</dbReference>
<dbReference type="SMR" id="A6QNR0"/>
<dbReference type="FunCoup" id="A6QNR0">
    <property type="interactions" value="10"/>
</dbReference>
<dbReference type="STRING" id="9913.ENSBTAP00000024186"/>
<dbReference type="PaxDb" id="9913-ENSBTAP00000024186"/>
<dbReference type="eggNOG" id="ENOG502QRCP">
    <property type="taxonomic scope" value="Eukaryota"/>
</dbReference>
<dbReference type="InParanoid" id="A6QNR0"/>
<dbReference type="Proteomes" id="UP000009136">
    <property type="component" value="Unplaced"/>
</dbReference>
<dbReference type="GO" id="GO:0005737">
    <property type="term" value="C:cytoplasm"/>
    <property type="evidence" value="ECO:0007669"/>
    <property type="project" value="UniProtKB-SubCell"/>
</dbReference>
<dbReference type="GO" id="GO:1903561">
    <property type="term" value="C:extracellular vesicle"/>
    <property type="evidence" value="ECO:0000250"/>
    <property type="project" value="UniProtKB"/>
</dbReference>
<dbReference type="GO" id="GO:0005634">
    <property type="term" value="C:nucleus"/>
    <property type="evidence" value="ECO:0007669"/>
    <property type="project" value="UniProtKB-SubCell"/>
</dbReference>
<dbReference type="GO" id="GO:0004563">
    <property type="term" value="F:beta-N-acetylhexosaminidase activity"/>
    <property type="evidence" value="ECO:0000250"/>
    <property type="project" value="UniProtKB"/>
</dbReference>
<dbReference type="GO" id="GO:0015929">
    <property type="term" value="F:hexosaminidase activity"/>
    <property type="evidence" value="ECO:0000250"/>
    <property type="project" value="UniProtKB"/>
</dbReference>
<dbReference type="GO" id="GO:0005975">
    <property type="term" value="P:carbohydrate metabolic process"/>
    <property type="evidence" value="ECO:0007669"/>
    <property type="project" value="InterPro"/>
</dbReference>
<dbReference type="CDD" id="cd06565">
    <property type="entry name" value="GH20_GcnA-like"/>
    <property type="match status" value="1"/>
</dbReference>
<dbReference type="FunFam" id="3.20.20.80:FF:000068">
    <property type="entry name" value="hexosaminidase D isoform X1"/>
    <property type="match status" value="1"/>
</dbReference>
<dbReference type="Gene3D" id="3.20.20.80">
    <property type="entry name" value="Glycosidases"/>
    <property type="match status" value="1"/>
</dbReference>
<dbReference type="InterPro" id="IPR015883">
    <property type="entry name" value="Glyco_hydro_20_cat"/>
</dbReference>
<dbReference type="InterPro" id="IPR017853">
    <property type="entry name" value="Glycoside_hydrolase_SF"/>
</dbReference>
<dbReference type="InterPro" id="IPR038901">
    <property type="entry name" value="HEXDC-like"/>
</dbReference>
<dbReference type="PANTHER" id="PTHR21040">
    <property type="entry name" value="BCDNA.GH04120"/>
    <property type="match status" value="1"/>
</dbReference>
<dbReference type="PANTHER" id="PTHR21040:SF6">
    <property type="entry name" value="HEXOSAMINIDASE D"/>
    <property type="match status" value="1"/>
</dbReference>
<dbReference type="Pfam" id="PF00728">
    <property type="entry name" value="Glyco_hydro_20"/>
    <property type="match status" value="1"/>
</dbReference>
<dbReference type="SUPFAM" id="SSF51445">
    <property type="entry name" value="(Trans)glycosidases"/>
    <property type="match status" value="1"/>
</dbReference>
<feature type="chain" id="PRO_0000316789" description="Hexosaminidase D">
    <location>
        <begin position="1"/>
        <end position="346"/>
    </location>
</feature>
<feature type="active site" description="Proton donor" evidence="1">
    <location>
        <position position="141"/>
    </location>
</feature>